<reference key="1">
    <citation type="submission" date="2006-10" db="EMBL/GenBank/DDBJ databases">
        <authorList>
            <person name="Fleischmann R.D."/>
            <person name="Dodson R.J."/>
            <person name="Haft D.H."/>
            <person name="Merkel J.S."/>
            <person name="Nelson W.C."/>
            <person name="Fraser C.M."/>
        </authorList>
    </citation>
    <scope>NUCLEOTIDE SEQUENCE [LARGE SCALE GENOMIC DNA]</scope>
    <source>
        <strain>ATCC 700084 / mc(2)155</strain>
    </source>
</reference>
<reference key="2">
    <citation type="journal article" date="2007" name="Genome Biol.">
        <title>Interrupted coding sequences in Mycobacterium smegmatis: authentic mutations or sequencing errors?</title>
        <authorList>
            <person name="Deshayes C."/>
            <person name="Perrodou E."/>
            <person name="Gallien S."/>
            <person name="Euphrasie D."/>
            <person name="Schaeffer C."/>
            <person name="Van-Dorsselaer A."/>
            <person name="Poch O."/>
            <person name="Lecompte O."/>
            <person name="Reyrat J.-M."/>
        </authorList>
    </citation>
    <scope>NUCLEOTIDE SEQUENCE [LARGE SCALE GENOMIC DNA]</scope>
    <source>
        <strain>ATCC 700084 / mc(2)155</strain>
    </source>
</reference>
<reference key="3">
    <citation type="journal article" date="2009" name="Genome Res.">
        <title>Ortho-proteogenomics: multiple proteomes investigation through orthology and a new MS-based protocol.</title>
        <authorList>
            <person name="Gallien S."/>
            <person name="Perrodou E."/>
            <person name="Carapito C."/>
            <person name="Deshayes C."/>
            <person name="Reyrat J.-M."/>
            <person name="Van Dorsselaer A."/>
            <person name="Poch O."/>
            <person name="Schaeffer C."/>
            <person name="Lecompte O."/>
        </authorList>
    </citation>
    <scope>NUCLEOTIDE SEQUENCE [LARGE SCALE GENOMIC DNA]</scope>
    <source>
        <strain>ATCC 700084 / mc(2)155</strain>
    </source>
</reference>
<reference key="4">
    <citation type="journal article" date="2010" name="Mol. Biosyst.">
        <title>Expansion of the mycobacterial 'PUPylome'.</title>
        <authorList>
            <person name="Watrous J."/>
            <person name="Burns K."/>
            <person name="Liu W.T."/>
            <person name="Patel A."/>
            <person name="Hook V."/>
            <person name="Bafna V."/>
            <person name="Barry C.E. III"/>
            <person name="Bark S."/>
            <person name="Dorrestein P.C."/>
        </authorList>
    </citation>
    <scope>PUPYLATION AT LYS-339</scope>
    <scope>IDENTIFICATION BY MASS SPECTROMETRY</scope>
</reference>
<organism>
    <name type="scientific">Mycolicibacterium smegmatis (strain ATCC 700084 / mc(2)155)</name>
    <name type="common">Mycobacterium smegmatis</name>
    <dbReference type="NCBI Taxonomy" id="246196"/>
    <lineage>
        <taxon>Bacteria</taxon>
        <taxon>Bacillati</taxon>
        <taxon>Actinomycetota</taxon>
        <taxon>Actinomycetes</taxon>
        <taxon>Mycobacteriales</taxon>
        <taxon>Mycobacteriaceae</taxon>
        <taxon>Mycolicibacterium</taxon>
    </lineage>
</organism>
<proteinExistence type="evidence at protein level"/>
<name>Y6286_MYCS2</name>
<keyword id="KW-0032">Aminotransferase</keyword>
<keyword id="KW-1017">Isopeptide bond</keyword>
<keyword id="KW-0663">Pyridoxal phosphate</keyword>
<keyword id="KW-1185">Reference proteome</keyword>
<keyword id="KW-0808">Transferase</keyword>
<keyword id="KW-0832">Ubl conjugation</keyword>
<accession>A0R5R7</accession>
<accession>I7GAH4</accession>
<protein>
    <recommendedName>
        <fullName>Putative aminotransferase MSMEG_6286/MSMEI_6121</fullName>
    </recommendedName>
</protein>
<feature type="chain" id="PRO_0000396113" description="Putative aminotransferase MSMEG_6286/MSMEI_6121">
    <location>
        <begin position="1"/>
        <end position="428"/>
    </location>
</feature>
<feature type="binding site" evidence="1">
    <location>
        <position position="37"/>
    </location>
    <ligand>
        <name>substrate</name>
    </ligand>
</feature>
<feature type="binding site" evidence="1">
    <location>
        <position position="72"/>
    </location>
    <ligand>
        <name>pyridoxal 5'-phosphate</name>
        <dbReference type="ChEBI" id="CHEBI:597326"/>
    </ligand>
</feature>
<feature type="binding site" evidence="1">
    <location>
        <begin position="102"/>
        <end position="105"/>
    </location>
    <ligand>
        <name>pyridoxal 5'-phosphate</name>
        <dbReference type="ChEBI" id="CHEBI:597326"/>
    </ligand>
</feature>
<feature type="binding site" evidence="1">
    <location>
        <position position="191"/>
    </location>
    <ligand>
        <name>pyridoxal 5'-phosphate</name>
        <dbReference type="ChEBI" id="CHEBI:597326"/>
    </ligand>
</feature>
<feature type="binding site" evidence="1">
    <location>
        <begin position="222"/>
        <end position="225"/>
    </location>
    <ligand>
        <name>pyridoxal 5'-phosphate</name>
        <dbReference type="ChEBI" id="CHEBI:597326"/>
    </ligand>
</feature>
<feature type="binding site" evidence="1">
    <location>
        <begin position="256"/>
        <end position="258"/>
    </location>
    <ligand>
        <name>pyridoxal 5'-phosphate</name>
        <dbReference type="ChEBI" id="CHEBI:597326"/>
    </ligand>
</feature>
<feature type="cross-link" description="Isoglutamyl lysine isopeptide (Lys-Gln) (interchain with Q-Cter in protein Pup)" evidence="2">
    <location>
        <position position="339"/>
    </location>
</feature>
<sequence>MSFQSLGRDDLLAQHELQQRNYAELQAKQLKLDLTRGKPSPEQLDLSNGLLSLPGDGADAYRDGHGTDTRNYGGVQGLPELRAIFAELLGLPVENLIAGNNASLEMMHDSVVFSLLHGGLDSPRPWSAEPTVKFLCPAPGYDRHFAITESFGIENVPVPIREDGPDVDVIEQLVASDPTIKGIWCVPVYSNPTGATYSTDVIRRLVQMPTAAKDFRLMWDNAYAVHTLTDEFVEPVDVLGLAAAAGNPNRPLVFASTSKITFAGAGVSFLGASADNIAWYLKHAGKKSIGPDKVNQLRHLRFFGDADGVRRQMQRHRELIAPKFALVAEILEDRLGESKIASWTDPKGGYFVSLDVWPGTAKRTVALAKDAGIAVTEAGSAFPYRKDPEDKNIRIAPTFPSLPDVRDAIDGLATCALLAATEALLGDK</sequence>
<evidence type="ECO:0000250" key="1"/>
<evidence type="ECO:0000269" key="2">
    <source>
    </source>
</evidence>
<evidence type="ECO:0000305" key="3"/>
<gene>
    <name type="ordered locus">MSMEG_6286</name>
    <name type="ordered locus">MSMEI_6121</name>
</gene>
<comment type="cofactor">
    <cofactor evidence="1">
        <name>pyridoxal 5'-phosphate</name>
        <dbReference type="ChEBI" id="CHEBI:597326"/>
    </cofactor>
</comment>
<comment type="similarity">
    <text evidence="3">Belongs to the class-I pyridoxal-phosphate-dependent aminotransferase family.</text>
</comment>
<dbReference type="EMBL" id="CP000480">
    <property type="protein sequence ID" value="ABK71113.1"/>
    <property type="molecule type" value="Genomic_DNA"/>
</dbReference>
<dbReference type="EMBL" id="CP001663">
    <property type="protein sequence ID" value="AFP42552.1"/>
    <property type="molecule type" value="Genomic_DNA"/>
</dbReference>
<dbReference type="RefSeq" id="WP_011731178.1">
    <property type="nucleotide sequence ID" value="NZ_SIJM01000013.1"/>
</dbReference>
<dbReference type="RefSeq" id="YP_890505.1">
    <property type="nucleotide sequence ID" value="NC_008596.1"/>
</dbReference>
<dbReference type="SMR" id="A0R5R7"/>
<dbReference type="STRING" id="246196.MSMEG_6286"/>
<dbReference type="PaxDb" id="246196-MSMEI_6121"/>
<dbReference type="KEGG" id="msb:LJ00_31075"/>
<dbReference type="KEGG" id="msg:MSMEI_6121"/>
<dbReference type="KEGG" id="msm:MSMEG_6286"/>
<dbReference type="PATRIC" id="fig|246196.19.peg.6123"/>
<dbReference type="eggNOG" id="COG1167">
    <property type="taxonomic scope" value="Bacteria"/>
</dbReference>
<dbReference type="OrthoDB" id="9802328at2"/>
<dbReference type="Proteomes" id="UP000000757">
    <property type="component" value="Chromosome"/>
</dbReference>
<dbReference type="Proteomes" id="UP000006158">
    <property type="component" value="Chromosome"/>
</dbReference>
<dbReference type="GO" id="GO:0004069">
    <property type="term" value="F:L-aspartate:2-oxoglutarate aminotransferase activity"/>
    <property type="evidence" value="ECO:0007669"/>
    <property type="project" value="InterPro"/>
</dbReference>
<dbReference type="CDD" id="cd00609">
    <property type="entry name" value="AAT_like"/>
    <property type="match status" value="1"/>
</dbReference>
<dbReference type="Gene3D" id="3.90.1150.10">
    <property type="entry name" value="Aspartate Aminotransferase, domain 1"/>
    <property type="match status" value="1"/>
</dbReference>
<dbReference type="Gene3D" id="3.40.640.10">
    <property type="entry name" value="Type I PLP-dependent aspartate aminotransferase-like (Major domain)"/>
    <property type="match status" value="1"/>
</dbReference>
<dbReference type="InterPro" id="IPR024551">
    <property type="entry name" value="AspAT_Ic"/>
</dbReference>
<dbReference type="InterPro" id="IPR015424">
    <property type="entry name" value="PyrdxlP-dep_Trfase"/>
</dbReference>
<dbReference type="InterPro" id="IPR015421">
    <property type="entry name" value="PyrdxlP-dep_Trfase_major"/>
</dbReference>
<dbReference type="InterPro" id="IPR015422">
    <property type="entry name" value="PyrdxlP-dep_Trfase_small"/>
</dbReference>
<dbReference type="PANTHER" id="PTHR43799">
    <property type="entry name" value="AMINOTRANSFERASE, PUTATIVE-RELATED"/>
    <property type="match status" value="1"/>
</dbReference>
<dbReference type="PANTHER" id="PTHR43799:SF1">
    <property type="entry name" value="ASPARTATE AMINOTRANSFERASE"/>
    <property type="match status" value="1"/>
</dbReference>
<dbReference type="Pfam" id="PF12897">
    <property type="entry name" value="Asp_aminotransf"/>
    <property type="match status" value="1"/>
</dbReference>
<dbReference type="SUPFAM" id="SSF53383">
    <property type="entry name" value="PLP-dependent transferases"/>
    <property type="match status" value="1"/>
</dbReference>